<organism>
    <name type="scientific">Dictyostelium discoideum</name>
    <name type="common">Social amoeba</name>
    <dbReference type="NCBI Taxonomy" id="44689"/>
    <lineage>
        <taxon>Eukaryota</taxon>
        <taxon>Amoebozoa</taxon>
        <taxon>Evosea</taxon>
        <taxon>Eumycetozoa</taxon>
        <taxon>Dictyostelia</taxon>
        <taxon>Dictyosteliales</taxon>
        <taxon>Dictyosteliaceae</taxon>
        <taxon>Dictyostelium</taxon>
    </lineage>
</organism>
<reference key="1">
    <citation type="journal article" date="1995" name="Gene">
        <title>Cloning of a cDNA encoding a novel heat-shock protein from Dictyostelium discoideum.</title>
        <authorList>
            <person name="de Maria A.C."/>
            <person name="Gomes S.L."/>
            <person name="Juliania M.H."/>
            <person name="Mazzarella R."/>
            <person name="Klein C."/>
        </authorList>
    </citation>
    <scope>NUCLEOTIDE SEQUENCE [MRNA]</scope>
    <scope>DEVELOPMENTAL STAGE</scope>
    <scope>INDUCTION</scope>
</reference>
<reference key="2">
    <citation type="journal article" date="1997" name="Gene">
        <title>Cloning, structural analysis and expression of the gene encoding Hsp32 from Dictyostelium discoideum.</title>
        <authorList>
            <person name="Maria A.C."/>
            <person name="Moerman A."/>
            <person name="Klein C."/>
            <person name="Gomes S.L."/>
        </authorList>
    </citation>
    <scope>NUCLEOTIDE SEQUENCE [GENOMIC DNA]</scope>
</reference>
<reference key="3">
    <citation type="journal article" date="2002" name="Nature">
        <title>Sequence and analysis of chromosome 2 of Dictyostelium discoideum.</title>
        <authorList>
            <person name="Gloeckner G."/>
            <person name="Eichinger L."/>
            <person name="Szafranski K."/>
            <person name="Pachebat J.A."/>
            <person name="Bankier A.T."/>
            <person name="Dear P.H."/>
            <person name="Lehmann R."/>
            <person name="Baumgart C."/>
            <person name="Parra G."/>
            <person name="Abril J.F."/>
            <person name="Guigo R."/>
            <person name="Kumpf K."/>
            <person name="Tunggal B."/>
            <person name="Cox E.C."/>
            <person name="Quail M.A."/>
            <person name="Platzer M."/>
            <person name="Rosenthal A."/>
            <person name="Noegel A.A."/>
        </authorList>
    </citation>
    <scope>NUCLEOTIDE SEQUENCE [LARGE SCALE GENOMIC DNA]</scope>
    <source>
        <strain>AX4</strain>
    </source>
</reference>
<reference key="4">
    <citation type="journal article" date="2005" name="Nature">
        <title>The genome of the social amoeba Dictyostelium discoideum.</title>
        <authorList>
            <person name="Eichinger L."/>
            <person name="Pachebat J.A."/>
            <person name="Gloeckner G."/>
            <person name="Rajandream M.A."/>
            <person name="Sucgang R."/>
            <person name="Berriman M."/>
            <person name="Song J."/>
            <person name="Olsen R."/>
            <person name="Szafranski K."/>
            <person name="Xu Q."/>
            <person name="Tunggal B."/>
            <person name="Kummerfeld S."/>
            <person name="Madera M."/>
            <person name="Konfortov B.A."/>
            <person name="Rivero F."/>
            <person name="Bankier A.T."/>
            <person name="Lehmann R."/>
            <person name="Hamlin N."/>
            <person name="Davies R."/>
            <person name="Gaudet P."/>
            <person name="Fey P."/>
            <person name="Pilcher K."/>
            <person name="Chen G."/>
            <person name="Saunders D."/>
            <person name="Sodergren E.J."/>
            <person name="Davis P."/>
            <person name="Kerhornou A."/>
            <person name="Nie X."/>
            <person name="Hall N."/>
            <person name="Anjard C."/>
            <person name="Hemphill L."/>
            <person name="Bason N."/>
            <person name="Farbrother P."/>
            <person name="Desany B."/>
            <person name="Just E."/>
            <person name="Morio T."/>
            <person name="Rost R."/>
            <person name="Churcher C.M."/>
            <person name="Cooper J."/>
            <person name="Haydock S."/>
            <person name="van Driessche N."/>
            <person name="Cronin A."/>
            <person name="Goodhead I."/>
            <person name="Muzny D.M."/>
            <person name="Mourier T."/>
            <person name="Pain A."/>
            <person name="Lu M."/>
            <person name="Harper D."/>
            <person name="Lindsay R."/>
            <person name="Hauser H."/>
            <person name="James K.D."/>
            <person name="Quiles M."/>
            <person name="Madan Babu M."/>
            <person name="Saito T."/>
            <person name="Buchrieser C."/>
            <person name="Wardroper A."/>
            <person name="Felder M."/>
            <person name="Thangavelu M."/>
            <person name="Johnson D."/>
            <person name="Knights A."/>
            <person name="Loulseged H."/>
            <person name="Mungall K.L."/>
            <person name="Oliver K."/>
            <person name="Price C."/>
            <person name="Quail M.A."/>
            <person name="Urushihara H."/>
            <person name="Hernandez J."/>
            <person name="Rabbinowitsch E."/>
            <person name="Steffen D."/>
            <person name="Sanders M."/>
            <person name="Ma J."/>
            <person name="Kohara Y."/>
            <person name="Sharp S."/>
            <person name="Simmonds M.N."/>
            <person name="Spiegler S."/>
            <person name="Tivey A."/>
            <person name="Sugano S."/>
            <person name="White B."/>
            <person name="Walker D."/>
            <person name="Woodward J.R."/>
            <person name="Winckler T."/>
            <person name="Tanaka Y."/>
            <person name="Shaulsky G."/>
            <person name="Schleicher M."/>
            <person name="Weinstock G.M."/>
            <person name="Rosenthal A."/>
            <person name="Cox E.C."/>
            <person name="Chisholm R.L."/>
            <person name="Gibbs R.A."/>
            <person name="Loomis W.F."/>
            <person name="Platzer M."/>
            <person name="Kay R.R."/>
            <person name="Williams J.G."/>
            <person name="Dear P.H."/>
            <person name="Noegel A.A."/>
            <person name="Barrell B.G."/>
            <person name="Kuspa A."/>
        </authorList>
    </citation>
    <scope>NUCLEOTIDE SEQUENCE [LARGE SCALE GENOMIC DNA]</scope>
    <source>
        <strain>AX4</strain>
    </source>
</reference>
<feature type="chain" id="PRO_0000084074" description="32 kDa heat shock protein">
    <location>
        <begin position="1"/>
        <end position="281"/>
    </location>
</feature>
<feature type="region of interest" description="Disordered" evidence="1">
    <location>
        <begin position="142"/>
        <end position="281"/>
    </location>
</feature>
<feature type="compositionally biased region" description="Acidic residues" evidence="1">
    <location>
        <begin position="142"/>
        <end position="168"/>
    </location>
</feature>
<feature type="compositionally biased region" description="Basic and acidic residues" evidence="1">
    <location>
        <begin position="180"/>
        <end position="209"/>
    </location>
</feature>
<feature type="compositionally biased region" description="Low complexity" evidence="1">
    <location>
        <begin position="210"/>
        <end position="273"/>
    </location>
</feature>
<name>HS32_DICDI</name>
<protein>
    <recommendedName>
        <fullName>32 kDa heat shock protein</fullName>
    </recommendedName>
    <alternativeName>
        <fullName>Protein 4-1</fullName>
    </alternativeName>
</protein>
<dbReference type="EMBL" id="L39778">
    <property type="protein sequence ID" value="AAA99510.1"/>
    <property type="molecule type" value="mRNA"/>
</dbReference>
<dbReference type="EMBL" id="U40211">
    <property type="protein sequence ID" value="AAC47710.1"/>
    <property type="molecule type" value="Genomic_DNA"/>
</dbReference>
<dbReference type="EMBL" id="AAFI02000008">
    <property type="protein sequence ID" value="EAL71047.1"/>
    <property type="molecule type" value="Genomic_DNA"/>
</dbReference>
<dbReference type="PIR" id="JC4295">
    <property type="entry name" value="JC4295"/>
</dbReference>
<dbReference type="RefSeq" id="XP_644864.1">
    <property type="nucleotide sequence ID" value="XM_639772.1"/>
</dbReference>
<dbReference type="SMR" id="P54658"/>
<dbReference type="FunCoup" id="P54658">
    <property type="interactions" value="491"/>
</dbReference>
<dbReference type="STRING" id="44689.P54658"/>
<dbReference type="TCDB" id="1.I.1.1.5">
    <property type="family name" value="the nuclear pore complex (npc) family"/>
</dbReference>
<dbReference type="PaxDb" id="44689-DDB0185048"/>
<dbReference type="EnsemblProtists" id="EAL71047">
    <property type="protein sequence ID" value="EAL71047"/>
    <property type="gene ID" value="DDB_G0272819"/>
</dbReference>
<dbReference type="GeneID" id="8618543"/>
<dbReference type="KEGG" id="ddi:DDB_G0272819"/>
<dbReference type="dictyBase" id="DDB_G0272819">
    <property type="gene designation" value="hspC"/>
</dbReference>
<dbReference type="VEuPathDB" id="AmoebaDB:DDB_G0272819"/>
<dbReference type="eggNOG" id="ENOG502RH5I">
    <property type="taxonomic scope" value="Eukaryota"/>
</dbReference>
<dbReference type="HOGENOM" id="CLU_991856_0_0_1"/>
<dbReference type="InParanoid" id="P54658"/>
<dbReference type="OMA" id="MMQFFGT"/>
<dbReference type="PRO" id="PR:P54658"/>
<dbReference type="Proteomes" id="UP000002195">
    <property type="component" value="Chromosome 2"/>
</dbReference>
<dbReference type="GO" id="GO:0000182">
    <property type="term" value="F:rDNA binding"/>
    <property type="evidence" value="ECO:0000314"/>
    <property type="project" value="dictyBase"/>
</dbReference>
<dbReference type="GO" id="GO:0034605">
    <property type="term" value="P:cellular response to heat"/>
    <property type="evidence" value="ECO:0000270"/>
    <property type="project" value="dictyBase"/>
</dbReference>
<dbReference type="Gene3D" id="2.60.120.340">
    <property type="entry name" value="Nucleoplasmin core domain"/>
    <property type="match status" value="1"/>
</dbReference>
<dbReference type="InterPro" id="IPR041232">
    <property type="entry name" value="NPL"/>
</dbReference>
<dbReference type="Pfam" id="PF17800">
    <property type="entry name" value="NPL"/>
    <property type="match status" value="1"/>
</dbReference>
<keyword id="KW-1185">Reference proteome</keyword>
<keyword id="KW-0346">Stress response</keyword>
<sequence length="281" mass="31482">MMQFFGTIVTKEEPVNLELDEGDIFHLTKAIIHPKSQGKGKVYLTAVISLMEEDEMEEDDVDDEEESPREDIVEIPIGILEAGKIDQIDLNLHYNFGQIVRFELQAENGAGYVVALSGSVITMEQGGCDDEDCDDEHCINHEDDEEIDSDEEFGDSDQDEEDSDDEEIPQLIAPATKKGKITEISEVPESKKEKTPEPKKVPEPKKEQVKQPTQPQQKKAAAQQPEKANNKPAAASPAKPQNNQSKNAPKQPQQQQQSPAKNNNNKRPQNQNENNKKKQKN</sequence>
<accession>P54658</accession>
<accession>Q559F2</accession>
<comment type="developmental stage">
    <text evidence="2">Present at high levels in growing cells but decreases dramatically during the early hours of development.</text>
</comment>
<comment type="induction">
    <text evidence="2">By heat shock.</text>
</comment>
<proteinExistence type="evidence at transcript level"/>
<gene>
    <name type="primary">hspC</name>
    <name type="synonym">hsp32</name>
    <name type="ORF">DDB_G0272819</name>
</gene>
<evidence type="ECO:0000256" key="1">
    <source>
        <dbReference type="SAM" id="MobiDB-lite"/>
    </source>
</evidence>
<evidence type="ECO:0000269" key="2">
    <source>
    </source>
</evidence>